<feature type="chain" id="PRO_0000380604" description="Uncharacterized methyltransferase MAP_3663c">
    <location>
        <begin position="1"/>
        <end position="255"/>
    </location>
</feature>
<protein>
    <recommendedName>
        <fullName>Uncharacterized methyltransferase MAP_3663c</fullName>
        <ecNumber>2.1.1.-</ecNumber>
    </recommendedName>
</protein>
<proteinExistence type="inferred from homology"/>
<reference key="1">
    <citation type="journal article" date="2005" name="Proc. Natl. Acad. Sci. U.S.A.">
        <title>The complete genome sequence of Mycobacterium avium subspecies paratuberculosis.</title>
        <authorList>
            <person name="Li L."/>
            <person name="Bannantine J.P."/>
            <person name="Zhang Q."/>
            <person name="Amonsin A."/>
            <person name="May B.J."/>
            <person name="Alt D."/>
            <person name="Banerji N."/>
            <person name="Kanjilal S."/>
            <person name="Kapur V."/>
        </authorList>
    </citation>
    <scope>NUCLEOTIDE SEQUENCE [LARGE SCALE GENOMIC DNA]</scope>
    <source>
        <strain>ATCC BAA-968 / K-10</strain>
    </source>
</reference>
<sequence length="255" mass="27228">MAVTDIFARRATLARSVRLLSQFRYERSEPARFYGALAADTAAMVDDLWRAGHGESAAGRTLLDVGGGPGYFAAAFTDAGVRYLGVEPDPGEMHAAGPVVAADTGTFVRASGMALPFADDSVDICLSSNVAEHVPRPWQLGAEMLRVTRPGGLAVLSYTVWLGPFGGHEMGLTHYLGGARAAERYARKHGHPAKNNYGSSLFEVSVADGLAWAASTGAALAAFPRYHPRWAWSLTSVPVLREFLVSNLVLVLQPQ</sequence>
<gene>
    <name type="ordered locus">MAP_3663c</name>
</gene>
<name>Y3663_MYCPA</name>
<organism>
    <name type="scientific">Mycolicibacterium paratuberculosis (strain ATCC BAA-968 / K-10)</name>
    <name type="common">Mycobacterium paratuberculosis</name>
    <dbReference type="NCBI Taxonomy" id="262316"/>
    <lineage>
        <taxon>Bacteria</taxon>
        <taxon>Bacillati</taxon>
        <taxon>Actinomycetota</taxon>
        <taxon>Actinomycetes</taxon>
        <taxon>Mycobacteriales</taxon>
        <taxon>Mycobacteriaceae</taxon>
        <taxon>Mycobacterium</taxon>
        <taxon>Mycobacterium avium complex (MAC)</taxon>
    </lineage>
</organism>
<comment type="similarity">
    <text evidence="1">Belongs to the methyltransferase superfamily.</text>
</comment>
<accession>Q73TQ5</accession>
<keyword id="KW-0489">Methyltransferase</keyword>
<keyword id="KW-1185">Reference proteome</keyword>
<keyword id="KW-0808">Transferase</keyword>
<dbReference type="EC" id="2.1.1.-"/>
<dbReference type="EMBL" id="AE016958">
    <property type="protein sequence ID" value="AAS06213.1"/>
    <property type="molecule type" value="Genomic_DNA"/>
</dbReference>
<dbReference type="RefSeq" id="WP_003879122.1">
    <property type="nucleotide sequence ID" value="NZ_CP106873.1"/>
</dbReference>
<dbReference type="SMR" id="Q73TQ5"/>
<dbReference type="STRING" id="262316.MAP_3663c"/>
<dbReference type="KEGG" id="mpa:MAP_3663c"/>
<dbReference type="PATRIC" id="fig|262316.17.peg.3896"/>
<dbReference type="eggNOG" id="COG0500">
    <property type="taxonomic scope" value="Bacteria"/>
</dbReference>
<dbReference type="HOGENOM" id="CLU_073035_0_0_11"/>
<dbReference type="Proteomes" id="UP000000580">
    <property type="component" value="Chromosome"/>
</dbReference>
<dbReference type="GO" id="GO:0008757">
    <property type="term" value="F:S-adenosylmethionine-dependent methyltransferase activity"/>
    <property type="evidence" value="ECO:0007669"/>
    <property type="project" value="InterPro"/>
</dbReference>
<dbReference type="GO" id="GO:0032259">
    <property type="term" value="P:methylation"/>
    <property type="evidence" value="ECO:0007669"/>
    <property type="project" value="UniProtKB-KW"/>
</dbReference>
<dbReference type="CDD" id="cd02440">
    <property type="entry name" value="AdoMet_MTases"/>
    <property type="match status" value="1"/>
</dbReference>
<dbReference type="Gene3D" id="3.40.50.150">
    <property type="entry name" value="Vaccinia Virus protein VP39"/>
    <property type="match status" value="1"/>
</dbReference>
<dbReference type="InterPro" id="IPR013216">
    <property type="entry name" value="Methyltransf_11"/>
</dbReference>
<dbReference type="InterPro" id="IPR029063">
    <property type="entry name" value="SAM-dependent_MTases_sf"/>
</dbReference>
<dbReference type="PANTHER" id="PTHR43591:SF24">
    <property type="entry name" value="2-METHOXY-6-POLYPRENYL-1,4-BENZOQUINOL METHYLASE, MITOCHONDRIAL"/>
    <property type="match status" value="1"/>
</dbReference>
<dbReference type="PANTHER" id="PTHR43591">
    <property type="entry name" value="METHYLTRANSFERASE"/>
    <property type="match status" value="1"/>
</dbReference>
<dbReference type="Pfam" id="PF08241">
    <property type="entry name" value="Methyltransf_11"/>
    <property type="match status" value="1"/>
</dbReference>
<dbReference type="SUPFAM" id="SSF53335">
    <property type="entry name" value="S-adenosyl-L-methionine-dependent methyltransferases"/>
    <property type="match status" value="1"/>
</dbReference>
<evidence type="ECO:0000305" key="1"/>